<evidence type="ECO:0000250" key="1">
    <source>
        <dbReference type="UniProtKB" id="F9XHX3"/>
    </source>
</evidence>
<evidence type="ECO:0000255" key="2"/>
<evidence type="ECO:0000255" key="3">
    <source>
        <dbReference type="PROSITE-ProRule" id="PRU01118"/>
    </source>
</evidence>
<evidence type="ECO:0000269" key="4">
    <source>
    </source>
</evidence>
<evidence type="ECO:0000269" key="5">
    <source>
    </source>
</evidence>
<evidence type="ECO:0000269" key="6">
    <source>
    </source>
</evidence>
<evidence type="ECO:0000303" key="7">
    <source>
    </source>
</evidence>
<evidence type="ECO:0000305" key="8"/>
<accession>A0A1X7S147</accession>
<reference key="1">
    <citation type="journal article" date="2018" name="BMC Biol.">
        <title>Pangenome analyses of the wheat pathogen Zymoseptoria tritici reveal the structural basis of a highly plastic eukaryotic genome.</title>
        <authorList>
            <person name="Plissonneau C."/>
            <person name="Hartmann F.E."/>
            <person name="Croll D."/>
        </authorList>
    </citation>
    <scope>NUCLEOTIDE SEQUENCE [LARGE SCALE GENOMIC DNA]</scope>
</reference>
<reference key="2">
    <citation type="journal article" date="2011" name="Plant Physiol.">
        <title>Analysis of two in planta expressed LysM effector homologs from the fungus Mycosphaerella graminicola reveals novel functional properties and varying contributions to virulence on wheat.</title>
        <authorList>
            <person name="Marshall R."/>
            <person name="Kombrink A."/>
            <person name="Motteram J."/>
            <person name="Loza-Reyes E."/>
            <person name="Lucas J."/>
            <person name="Hammond-Kosack K.E."/>
            <person name="Thomma B.P."/>
            <person name="Rudd J.J."/>
        </authorList>
    </citation>
    <scope>FUNCTION</scope>
    <scope>INDUCTION</scope>
    <scope>CHITIN-BINDING</scope>
    <source>
        <strain>CBS 115943 / IPO323</strain>
    </source>
</reference>
<reference key="3">
    <citation type="journal article" date="2021" name="Mol. Plant Pathol.">
        <title>Three LysM effectors of Zymoseptoria tritici collectively disarm chitin-triggered plant immunity.</title>
        <authorList>
            <person name="Tian H."/>
            <person name="MacKenzie C.I."/>
            <person name="Rodriguez-Moreno L."/>
            <person name="van den Berg G.C.M."/>
            <person name="Chen H."/>
            <person name="Rudd J.J."/>
            <person name="Mesters J.R."/>
            <person name="Thomma B.P.H.J."/>
        </authorList>
    </citation>
    <scope>FUNCTION</scope>
    <scope>DISRUPTION PHENOTYPE</scope>
    <scope>CHITIN-BINDING</scope>
    <source>
        <strain>CBS 115943 / IPO323</strain>
    </source>
</reference>
<reference key="4">
    <citation type="journal article" date="2020" name="PLoS Pathog.">
        <title>A secreted LysM effector protects fungal hyphae through chitin-dependent homodimer polymerization.</title>
        <authorList>
            <person name="Sanchez-Vallet A."/>
            <person name="Tian H."/>
            <person name="Rodriguez-Moreno L."/>
            <person name="Valkenburg D.J."/>
            <person name="Saleem-Batcha R."/>
            <person name="Wawra S."/>
            <person name="Kombrink A."/>
            <person name="Verhage L."/>
            <person name="de Jonge R."/>
            <person name="van Esse H.P."/>
            <person name="Zuccaro A."/>
            <person name="Croll D."/>
            <person name="Mesters J.R."/>
            <person name="Thomma B.P.H.J."/>
        </authorList>
    </citation>
    <scope>FUNCTION</scope>
    <scope>DISRUPTION PHENOTYPE</scope>
    <scope>SUBCELLULAR LOCATION</scope>
    <source>
        <strain>CBS 115943 / IPO323</strain>
    </source>
</reference>
<sequence>MQFTALVAALLSVAAVQAQRNPITITPQFDCGATNSQQYVARSGDTLTKIAQEIYHDVVGVCDIARANNLADPNRIDAGTPYTIPINCQTYDRNSCL</sequence>
<organism>
    <name type="scientific">Zymoseptoria tritici (strain ST99CH_3D7)</name>
    <dbReference type="NCBI Taxonomy" id="1276538"/>
    <lineage>
        <taxon>Eukaryota</taxon>
        <taxon>Fungi</taxon>
        <taxon>Dikarya</taxon>
        <taxon>Ascomycota</taxon>
        <taxon>Pezizomycotina</taxon>
        <taxon>Dothideomycetes</taxon>
        <taxon>Dothideomycetidae</taxon>
        <taxon>Mycosphaerellales</taxon>
        <taxon>Mycosphaerellaceae</taxon>
        <taxon>Zymoseptoria</taxon>
    </lineage>
</organism>
<protein>
    <recommendedName>
        <fullName evidence="7">Secreted LysM effector Mg1LysM</fullName>
    </recommendedName>
    <alternativeName>
        <fullName evidence="7">LysM domain-containing protein Mg1LysM</fullName>
    </alternativeName>
    <alternativeName>
        <fullName evidence="7">One LysM domain-containing protein</fullName>
    </alternativeName>
</protein>
<gene>
    <name evidence="7" type="primary">Mg1LysM</name>
    <name type="ORF">ZT3D7_G8566</name>
</gene>
<keyword id="KW-0134">Cell wall</keyword>
<keyword id="KW-1185">Reference proteome</keyword>
<keyword id="KW-0964">Secreted</keyword>
<keyword id="KW-0732">Signal</keyword>
<comment type="function">
    <text evidence="4 5 6">Secreted effector that enables the plant pathogenic fungus to manipulate host defenses for successful infection (PubMed:21467214, PubMed:32574207, PubMed:33797163). Binds chitin but not cellulose or xylan (PubMed:21467214, PubMed:33797163). Chitin-induced polymerization of homodimers forms a contiguous Mg1LysM highly oligomeric super-complexe that is anchored to the chitin in the fungal cell wall to prevent hydrolysis by host chitinases (PubMed:21467214, PubMed:32574207).</text>
</comment>
<comment type="subunit">
    <text evidence="1">Forms homodimers in a chitin-independent manner through interactions at the N-termini of Mg1LysM monomers (By similarity). Homodimers are further polymerized in a chitin-dependent manner (By similarity).</text>
</comment>
<comment type="subcellular location">
    <subcellularLocation>
        <location evidence="5">Secreted</location>
    </subcellularLocation>
    <subcellularLocation>
        <location evidence="5">Secreted</location>
        <location evidence="5">Cell wall</location>
    </subcellularLocation>
</comment>
<comment type="induction">
    <text evidence="4">Expression is up-regulated during wheat leaf infection.</text>
</comment>
<comment type="domain">
    <text evidence="4 5 6">The LysM (lysin motif) domains are small globular domains involved in binding chitin in eukaryotes. Mg1LysM contains one LysM domain.</text>
</comment>
<comment type="disruption phenotype">
    <text evidence="5 6">Impairs protection against host chitinases and developes significantly more pycnidia.</text>
</comment>
<comment type="miscellaneous">
    <text evidence="8">In plants, chitin acts as a microbe-associated molecular pattern (MAMP) that is recognized by lysin motif (LysM)-containing plant cell surface-localized pattern recognition receptors (PRRs) that activate a plethora of downstream immune responses.</text>
</comment>
<comment type="similarity">
    <text evidence="8">Belongs to the secreted LysM effector family.</text>
</comment>
<dbReference type="EMBL" id="LT853699">
    <property type="protein sequence ID" value="SMQ53413.1"/>
    <property type="molecule type" value="Genomic_DNA"/>
</dbReference>
<dbReference type="SMR" id="A0A1X7S147"/>
<dbReference type="Proteomes" id="UP000215127">
    <property type="component" value="Chromosome 8"/>
</dbReference>
<dbReference type="GO" id="GO:0005576">
    <property type="term" value="C:extracellular region"/>
    <property type="evidence" value="ECO:0007669"/>
    <property type="project" value="UniProtKB-SubCell"/>
</dbReference>
<dbReference type="CDD" id="cd00118">
    <property type="entry name" value="LysM"/>
    <property type="match status" value="1"/>
</dbReference>
<dbReference type="Gene3D" id="3.10.350.10">
    <property type="entry name" value="LysM domain"/>
    <property type="match status" value="1"/>
</dbReference>
<dbReference type="InterPro" id="IPR018392">
    <property type="entry name" value="LysM_dom"/>
</dbReference>
<dbReference type="InterPro" id="IPR036779">
    <property type="entry name" value="LysM_dom_sf"/>
</dbReference>
<dbReference type="Pfam" id="PF01476">
    <property type="entry name" value="LysM"/>
    <property type="match status" value="1"/>
</dbReference>
<dbReference type="SMART" id="SM00257">
    <property type="entry name" value="LysM"/>
    <property type="match status" value="1"/>
</dbReference>
<dbReference type="SUPFAM" id="SSF54106">
    <property type="entry name" value="LysM domain"/>
    <property type="match status" value="1"/>
</dbReference>
<dbReference type="PROSITE" id="PS51782">
    <property type="entry name" value="LYSM"/>
    <property type="match status" value="1"/>
</dbReference>
<feature type="signal peptide" evidence="2">
    <location>
        <begin position="1"/>
        <end position="18"/>
    </location>
</feature>
<feature type="chain" id="PRO_5003395522" description="Secreted LysM effector Mg1LysM" evidence="2">
    <location>
        <begin position="19"/>
        <end position="97"/>
    </location>
</feature>
<feature type="domain" description="LysM" evidence="3">
    <location>
        <begin position="37"/>
        <end position="84"/>
    </location>
</feature>
<feature type="binding site" evidence="1">
    <location>
        <position position="44"/>
    </location>
    <ligand>
        <name>chitin</name>
        <dbReference type="ChEBI" id="CHEBI:17029"/>
    </ligand>
</feature>
<feature type="binding site" evidence="1">
    <location>
        <position position="48"/>
    </location>
    <ligand>
        <name>chitin</name>
        <dbReference type="ChEBI" id="CHEBI:17029"/>
    </ligand>
</feature>
<feature type="binding site" evidence="1">
    <location>
        <position position="74"/>
    </location>
    <ligand>
        <name>chitin</name>
        <dbReference type="ChEBI" id="CHEBI:17029"/>
    </ligand>
</feature>
<feature type="binding site" evidence="1">
    <location>
        <position position="76"/>
    </location>
    <ligand>
        <name>chitin</name>
        <dbReference type="ChEBI" id="CHEBI:17029"/>
    </ligand>
</feature>
<proteinExistence type="evidence at protein level"/>
<name>LYSM1_ZYMT9</name>